<protein>
    <recommendedName>
        <fullName evidence="1">Lipid droplet assembly factor 1-A</fullName>
    </recommendedName>
    <alternativeName>
        <fullName>Promethin-A</fullName>
    </alternativeName>
    <alternativeName>
        <fullName>Transmembrane protein 159-A</fullName>
    </alternativeName>
</protein>
<comment type="function">
    <text evidence="1">Plays an important role in the formation of lipid droplets (LD) which are storage organelles at the center of lipid and energy homeostasis.</text>
</comment>
<comment type="subcellular location">
    <subcellularLocation>
        <location evidence="1">Endoplasmic reticulum membrane</location>
        <topology evidence="2">Multi-pass membrane protein</topology>
    </subcellularLocation>
    <subcellularLocation>
        <location evidence="1">Lipid droplet</location>
    </subcellularLocation>
</comment>
<comment type="similarity">
    <text evidence="3">Belongs to the LDAF1 family.</text>
</comment>
<gene>
    <name evidence="1" type="primary">ldaf1-a</name>
    <name type="synonym">tmem159-a</name>
</gene>
<feature type="chain" id="PRO_0000279538" description="Lipid droplet assembly factor 1-A">
    <location>
        <begin position="1"/>
        <end position="162"/>
    </location>
</feature>
<feature type="topological domain" description="Cytoplasmic" evidence="1">
    <location>
        <begin position="1"/>
        <end position="42"/>
    </location>
</feature>
<feature type="transmembrane region" description="Helical" evidence="2">
    <location>
        <begin position="43"/>
        <end position="63"/>
    </location>
</feature>
<feature type="topological domain" description="Lumenal" evidence="1">
    <location>
        <begin position="64"/>
        <end position="65"/>
    </location>
</feature>
<feature type="transmembrane region" description="Helical" evidence="2">
    <location>
        <begin position="66"/>
        <end position="86"/>
    </location>
</feature>
<feature type="topological domain" description="Cytoplasmic" evidence="1">
    <location>
        <position position="87"/>
    </location>
</feature>
<feature type="transmembrane region" description="Helical" evidence="2">
    <location>
        <begin position="88"/>
        <end position="108"/>
    </location>
</feature>
<feature type="topological domain" description="Lumenal" evidence="1">
    <location>
        <position position="109"/>
    </location>
</feature>
<feature type="transmembrane region" description="Helical" evidence="2">
    <location>
        <begin position="110"/>
        <end position="130"/>
    </location>
</feature>
<feature type="topological domain" description="Cytoplasmic" evidence="1">
    <location>
        <begin position="131"/>
        <end position="162"/>
    </location>
</feature>
<evidence type="ECO:0000250" key="1">
    <source>
        <dbReference type="UniProtKB" id="Q96B96"/>
    </source>
</evidence>
<evidence type="ECO:0000255" key="2"/>
<evidence type="ECO:0000305" key="3"/>
<reference key="1">
    <citation type="submission" date="2004-08" db="EMBL/GenBank/DDBJ databases">
        <authorList>
            <consortium name="NIH - Xenopus Gene Collection (XGC) project"/>
        </authorList>
    </citation>
    <scope>NUCLEOTIDE SEQUENCE [LARGE SCALE MRNA]</scope>
    <source>
        <tissue>Kidney</tissue>
    </source>
</reference>
<organism>
    <name type="scientific">Xenopus laevis</name>
    <name type="common">African clawed frog</name>
    <dbReference type="NCBI Taxonomy" id="8355"/>
    <lineage>
        <taxon>Eukaryota</taxon>
        <taxon>Metazoa</taxon>
        <taxon>Chordata</taxon>
        <taxon>Craniata</taxon>
        <taxon>Vertebrata</taxon>
        <taxon>Euteleostomi</taxon>
        <taxon>Amphibia</taxon>
        <taxon>Batrachia</taxon>
        <taxon>Anura</taxon>
        <taxon>Pipoidea</taxon>
        <taxon>Pipidae</taxon>
        <taxon>Xenopodinae</taxon>
        <taxon>Xenopus</taxon>
        <taxon>Xenopus</taxon>
    </lineage>
</organism>
<keyword id="KW-0256">Endoplasmic reticulum</keyword>
<keyword id="KW-0551">Lipid droplet</keyword>
<keyword id="KW-0472">Membrane</keyword>
<keyword id="KW-1185">Reference proteome</keyword>
<keyword id="KW-0812">Transmembrane</keyword>
<keyword id="KW-1133">Transmembrane helix</keyword>
<name>LDF1A_XENLA</name>
<proteinExistence type="evidence at transcript level"/>
<sequence>MASAENLYQEKMQELQKQMNKVMQTINNHSKVEAFLNSPFGQYLDQHPFVTLSLLVFISLSAVPVGIFLTLIAGTAIAVCLAVLIIEGIVISVGGIALLCILCGLAVMSLGVAAVLCVSYVAGSSVLNYIHAYRVTVGTRGRSGPISLNHETTTAEKSYRSS</sequence>
<accession>Q68F33</accession>
<dbReference type="EMBL" id="BC080012">
    <property type="protein sequence ID" value="AAH80012.1"/>
    <property type="molecule type" value="mRNA"/>
</dbReference>
<dbReference type="RefSeq" id="NP_001087496.1">
    <property type="nucleotide sequence ID" value="NM_001094027.1"/>
</dbReference>
<dbReference type="RefSeq" id="XP_018089973.1">
    <property type="nucleotide sequence ID" value="XM_018234484.1"/>
</dbReference>
<dbReference type="DNASU" id="447320"/>
<dbReference type="GeneID" id="447320"/>
<dbReference type="KEGG" id="xla:447320"/>
<dbReference type="AGR" id="Xenbase:XB-GENE-6254011"/>
<dbReference type="CTD" id="447320"/>
<dbReference type="Xenbase" id="XB-GENE-6254011">
    <property type="gene designation" value="ldaf1.L"/>
</dbReference>
<dbReference type="OMA" id="VNYWFPP"/>
<dbReference type="OrthoDB" id="9943433at2759"/>
<dbReference type="Proteomes" id="UP000186698">
    <property type="component" value="Chromosome 9_10L"/>
</dbReference>
<dbReference type="Bgee" id="447320">
    <property type="expression patterns" value="Expressed in muscle tissue and 18 other cell types or tissues"/>
</dbReference>
<dbReference type="GO" id="GO:0005789">
    <property type="term" value="C:endoplasmic reticulum membrane"/>
    <property type="evidence" value="ECO:0000250"/>
    <property type="project" value="UniProtKB"/>
</dbReference>
<dbReference type="GO" id="GO:0005811">
    <property type="term" value="C:lipid droplet"/>
    <property type="evidence" value="ECO:0000250"/>
    <property type="project" value="UniProtKB"/>
</dbReference>
<dbReference type="GO" id="GO:0140042">
    <property type="term" value="P:lipid droplet formation"/>
    <property type="evidence" value="ECO:0000250"/>
    <property type="project" value="UniProtKB"/>
</dbReference>
<dbReference type="InterPro" id="IPR029709">
    <property type="entry name" value="LDAF1"/>
</dbReference>
<dbReference type="PANTHER" id="PTHR14275:SF0">
    <property type="entry name" value="LIPID DROPLET ASSEMBLY FACTOR 1"/>
    <property type="match status" value="1"/>
</dbReference>
<dbReference type="PANTHER" id="PTHR14275">
    <property type="entry name" value="PROMETHIN"/>
    <property type="match status" value="1"/>
</dbReference>
<dbReference type="Pfam" id="PF16015">
    <property type="entry name" value="Promethin"/>
    <property type="match status" value="1"/>
</dbReference>